<protein>
    <recommendedName>
        <fullName evidence="2">Large ribosomal subunit protein uL29</fullName>
    </recommendedName>
    <alternativeName>
        <fullName>60S ribosomal protein L35</fullName>
    </alternativeName>
</protein>
<reference key="1">
    <citation type="journal article" date="2004" name="Proc. Natl. Acad. Sci. U.S.A.">
        <title>The diploid genome sequence of Candida albicans.</title>
        <authorList>
            <person name="Jones T."/>
            <person name="Federspiel N.A."/>
            <person name="Chibana H."/>
            <person name="Dungan J."/>
            <person name="Kalman S."/>
            <person name="Magee B.B."/>
            <person name="Newport G."/>
            <person name="Thorstenson Y.R."/>
            <person name="Agabian N."/>
            <person name="Magee P.T."/>
            <person name="Davis R.W."/>
            <person name="Scherer S."/>
        </authorList>
    </citation>
    <scope>NUCLEOTIDE SEQUENCE [LARGE SCALE GENOMIC DNA]</scope>
    <source>
        <strain>SC5314 / ATCC MYA-2876</strain>
    </source>
</reference>
<reference key="2">
    <citation type="journal article" date="2007" name="Genome Biol.">
        <title>Assembly of the Candida albicans genome into sixteen supercontigs aligned on the eight chromosomes.</title>
        <authorList>
            <person name="van het Hoog M."/>
            <person name="Rast T.J."/>
            <person name="Martchenko M."/>
            <person name="Grindle S."/>
            <person name="Dignard D."/>
            <person name="Hogues H."/>
            <person name="Cuomo C."/>
            <person name="Berriman M."/>
            <person name="Scherer S."/>
            <person name="Magee B.B."/>
            <person name="Whiteway M."/>
            <person name="Chibana H."/>
            <person name="Nantel A."/>
            <person name="Magee P.T."/>
        </authorList>
    </citation>
    <scope>GENOME REANNOTATION</scope>
    <source>
        <strain>SC5314 / ATCC MYA-2876</strain>
    </source>
</reference>
<reference key="3">
    <citation type="journal article" date="2013" name="Genome Biol.">
        <title>Assembly of a phased diploid Candida albicans genome facilitates allele-specific measurements and provides a simple model for repeat and indel structure.</title>
        <authorList>
            <person name="Muzzey D."/>
            <person name="Schwartz K."/>
            <person name="Weissman J.S."/>
            <person name="Sherlock G."/>
        </authorList>
    </citation>
    <scope>NUCLEOTIDE SEQUENCE [LARGE SCALE GENOMIC DNA]</scope>
    <scope>GENOME REANNOTATION</scope>
    <source>
        <strain>SC5314 / ATCC MYA-2876</strain>
    </source>
</reference>
<reference evidence="5 6 7" key="4">
    <citation type="journal article" date="2022" name="Sci. Adv.">
        <title>E-site drug specificity of the human pathogen Candida albicans ribosome.</title>
        <authorList>
            <person name="Zgadzay Y."/>
            <person name="Kolosova O."/>
            <person name="Stetsenko A."/>
            <person name="Wu C."/>
            <person name="Bruchlen D."/>
            <person name="Usachev K."/>
            <person name="Validov S."/>
            <person name="Jenner L."/>
            <person name="Rogachev A."/>
            <person name="Yusupova G."/>
            <person name="Sachs M.S."/>
            <person name="Guskov A."/>
            <person name="Yusupov M."/>
        </authorList>
    </citation>
    <scope>STRUCTURE BY ELECTRON MICROSCOPY (2.32 ANGSTROMS) OF THE 80S RIBOSOME</scope>
    <scope>SUBUNIT</scope>
</reference>
<accession>A0A1D8PK30</accession>
<organism>
    <name type="scientific">Candida albicans (strain SC5314 / ATCC MYA-2876)</name>
    <name type="common">Yeast</name>
    <dbReference type="NCBI Taxonomy" id="237561"/>
    <lineage>
        <taxon>Eukaryota</taxon>
        <taxon>Fungi</taxon>
        <taxon>Dikarya</taxon>
        <taxon>Ascomycota</taxon>
        <taxon>Saccharomycotina</taxon>
        <taxon>Pichiomycetes</taxon>
        <taxon>Debaryomycetaceae</taxon>
        <taxon>Candida/Lodderomyces clade</taxon>
        <taxon>Candida</taxon>
    </lineage>
</organism>
<sequence>MAGVKTFELRTKSKEQLESQLVELKQELATLKVQKLQRPSLPRIHTVRKNIARVLTVINLNQRENVRAFYAGKKYIPKDLRAKKTRALRRKLTKFEASQETEKARKQRIAFPQRKFAIKA</sequence>
<name>RL35_CANAL</name>
<proteinExistence type="evidence at protein level"/>
<gene>
    <name evidence="2" type="primary">RPL35</name>
    <name type="ordered locus">orf19.5964.2</name>
    <name type="ORF">CAALFM_C304960WA</name>
</gene>
<dbReference type="EMBL" id="CP017625">
    <property type="protein sequence ID" value="AOW28512.1"/>
    <property type="molecule type" value="Genomic_DNA"/>
</dbReference>
<dbReference type="RefSeq" id="XP_019330870.1">
    <property type="nucleotide sequence ID" value="XM_019475325.1"/>
</dbReference>
<dbReference type="PDB" id="7PZY">
    <property type="method" value="EM"/>
    <property type="resolution" value="2.32 A"/>
    <property type="chains" value="AI=1-120"/>
</dbReference>
<dbReference type="PDB" id="7Q08">
    <property type="method" value="EM"/>
    <property type="resolution" value="2.56 A"/>
    <property type="chains" value="AI=1-120"/>
</dbReference>
<dbReference type="PDB" id="7Q0F">
    <property type="method" value="EM"/>
    <property type="resolution" value="2.64 A"/>
    <property type="chains" value="AI=1-120"/>
</dbReference>
<dbReference type="PDB" id="7Q0P">
    <property type="method" value="EM"/>
    <property type="resolution" value="2.77 A"/>
    <property type="chains" value="AI=1-120"/>
</dbReference>
<dbReference type="PDB" id="7Q0R">
    <property type="method" value="EM"/>
    <property type="resolution" value="2.67 A"/>
    <property type="chains" value="AI=1-120"/>
</dbReference>
<dbReference type="PDB" id="8C3A">
    <property type="method" value="X-ray"/>
    <property type="resolution" value="3.00 A"/>
    <property type="chains" value="AI/CC=1-120"/>
</dbReference>
<dbReference type="PDB" id="8OGJ">
    <property type="method" value="EM"/>
    <property type="resolution" value="3.10 A"/>
    <property type="chains" value="AI=1-120"/>
</dbReference>
<dbReference type="PDB" id="8OH6">
    <property type="method" value="X-ray"/>
    <property type="resolution" value="3.35 A"/>
    <property type="chains" value="AI/CC=1-120"/>
</dbReference>
<dbReference type="PDB" id="8OI5">
    <property type="method" value="X-ray"/>
    <property type="resolution" value="2.90 A"/>
    <property type="chains" value="AI/CC=1-120"/>
</dbReference>
<dbReference type="PDB" id="8OJ3">
    <property type="method" value="X-ray"/>
    <property type="resolution" value="3.50 A"/>
    <property type="chains" value="AI/CC=1-120"/>
</dbReference>
<dbReference type="PDBsum" id="7PZY"/>
<dbReference type="PDBsum" id="7Q08"/>
<dbReference type="PDBsum" id="7Q0F"/>
<dbReference type="PDBsum" id="7Q0P"/>
<dbReference type="PDBsum" id="7Q0R"/>
<dbReference type="PDBsum" id="8C3A"/>
<dbReference type="PDBsum" id="8OGJ"/>
<dbReference type="PDBsum" id="8OH6"/>
<dbReference type="PDBsum" id="8OI5"/>
<dbReference type="PDBsum" id="8OJ3"/>
<dbReference type="SMR" id="A0A1D8PK30"/>
<dbReference type="FunCoup" id="A0A1D8PK30">
    <property type="interactions" value="968"/>
</dbReference>
<dbReference type="STRING" id="237561.A0A1D8PK30"/>
<dbReference type="EnsemblFungi" id="C3_04960W_A-T">
    <property type="protein sequence ID" value="C3_04960W_A-T-p1"/>
    <property type="gene ID" value="C3_04960W_A"/>
</dbReference>
<dbReference type="GeneID" id="30515207"/>
<dbReference type="KEGG" id="cal:CAALFM_C304960WA"/>
<dbReference type="CGD" id="CAL0000191177">
    <property type="gene designation" value="RPL35"/>
</dbReference>
<dbReference type="VEuPathDB" id="FungiDB:C3_04960W_A"/>
<dbReference type="eggNOG" id="KOG3436">
    <property type="taxonomic scope" value="Eukaryota"/>
</dbReference>
<dbReference type="InParanoid" id="A0A1D8PK30"/>
<dbReference type="OMA" id="VMNQKAR"/>
<dbReference type="OrthoDB" id="528635at2759"/>
<dbReference type="Proteomes" id="UP000000559">
    <property type="component" value="Chromosome 3"/>
</dbReference>
<dbReference type="GO" id="GO:0022625">
    <property type="term" value="C:cytosolic large ribosomal subunit"/>
    <property type="evidence" value="ECO:0000318"/>
    <property type="project" value="GO_Central"/>
</dbReference>
<dbReference type="GO" id="GO:0030684">
    <property type="term" value="C:preribosome"/>
    <property type="evidence" value="ECO:0007669"/>
    <property type="project" value="EnsemblFungi"/>
</dbReference>
<dbReference type="GO" id="GO:0003729">
    <property type="term" value="F:mRNA binding"/>
    <property type="evidence" value="ECO:0000318"/>
    <property type="project" value="GO_Central"/>
</dbReference>
<dbReference type="GO" id="GO:0003735">
    <property type="term" value="F:structural constituent of ribosome"/>
    <property type="evidence" value="ECO:0000318"/>
    <property type="project" value="GO_Central"/>
</dbReference>
<dbReference type="GO" id="GO:0000463">
    <property type="term" value="P:maturation of LSU-rRNA from tricistronic rRNA transcript (SSU-rRNA, 5.8S rRNA, LSU-rRNA)"/>
    <property type="evidence" value="ECO:0000318"/>
    <property type="project" value="GO_Central"/>
</dbReference>
<dbReference type="GO" id="GO:0006412">
    <property type="term" value="P:translation"/>
    <property type="evidence" value="ECO:0007669"/>
    <property type="project" value="InterPro"/>
</dbReference>
<dbReference type="CDD" id="cd00427">
    <property type="entry name" value="Ribosomal_L29_HIP"/>
    <property type="match status" value="1"/>
</dbReference>
<dbReference type="FunFam" id="1.10.287.310:FF:000002">
    <property type="entry name" value="60S ribosomal protein L35"/>
    <property type="match status" value="1"/>
</dbReference>
<dbReference type="FunFam" id="6.10.250.3450:FF:000001">
    <property type="entry name" value="60S ribosomal protein L35"/>
    <property type="match status" value="1"/>
</dbReference>
<dbReference type="Gene3D" id="1.10.287.310">
    <property type="match status" value="1"/>
</dbReference>
<dbReference type="Gene3D" id="6.10.250.3450">
    <property type="match status" value="1"/>
</dbReference>
<dbReference type="HAMAP" id="MF_00374">
    <property type="entry name" value="Ribosomal_uL29"/>
    <property type="match status" value="1"/>
</dbReference>
<dbReference type="InterPro" id="IPR001854">
    <property type="entry name" value="Ribosomal_uL29"/>
</dbReference>
<dbReference type="InterPro" id="IPR045059">
    <property type="entry name" value="Ribosomal_uL29_euk"/>
</dbReference>
<dbReference type="InterPro" id="IPR036049">
    <property type="entry name" value="Ribosomal_uL29_sf"/>
</dbReference>
<dbReference type="NCBIfam" id="TIGR00012">
    <property type="entry name" value="L29"/>
    <property type="match status" value="1"/>
</dbReference>
<dbReference type="PANTHER" id="PTHR45722">
    <property type="entry name" value="60S RIBOSOMAL PROTEIN L35"/>
    <property type="match status" value="1"/>
</dbReference>
<dbReference type="PANTHER" id="PTHR45722:SF2">
    <property type="entry name" value="LARGE RIBOSOMAL SUBUNIT PROTEIN UL29-RELATED"/>
    <property type="match status" value="1"/>
</dbReference>
<dbReference type="Pfam" id="PF00831">
    <property type="entry name" value="Ribosomal_L29"/>
    <property type="match status" value="1"/>
</dbReference>
<dbReference type="SUPFAM" id="SSF46561">
    <property type="entry name" value="Ribosomal protein L29 (L29p)"/>
    <property type="match status" value="1"/>
</dbReference>
<comment type="function">
    <text evidence="4">Component of the ribosome, a large ribonucleoprotein complex responsible for the synthesis of proteins in the cell. The small ribosomal subunit (SSU) binds messenger RNAs (mRNAs) and translates the encoded message by selecting cognate aminoacyl-transfer RNA (tRNA) molecules. The large subunit (LSU) contains the ribosomal catalytic site termed the peptidyl transferase center (PTC), which catalyzes the formation of peptide bonds, thereby polymerizing the amino acids delivered by tRNAs into a polypeptide chain. The nascent polypeptides leave the ribosome through a tunnel in the LSU and interact with protein factors that function in enzymatic processing, targeting, and the membrane insertion of nascent chains at the exit of the ribosomal tunnel.</text>
</comment>
<comment type="subunit">
    <text evidence="1">Component of the large ribosomal subunit (PubMed:35613268). Mature ribosomes consist of a small (40S) and a large (60S) subunit (PubMed:35613268). The 40S subunit contains about 32 different proteins and 1 molecule of RNA (18S) (PubMed:35613268). The 60S subunit contains 45 different proteins and 3 molecules of RNA (25S, 5.8S and 5S) (PubMed:35613268).</text>
</comment>
<comment type="subcellular location">
    <subcellularLocation>
        <location evidence="4">Cytoplasm</location>
    </subcellularLocation>
</comment>
<comment type="similarity">
    <text evidence="3">Belongs to the universal ribosomal protein uL29 family.</text>
</comment>
<keyword id="KW-0002">3D-structure</keyword>
<keyword id="KW-0963">Cytoplasm</keyword>
<keyword id="KW-1185">Reference proteome</keyword>
<keyword id="KW-0687">Ribonucleoprotein</keyword>
<keyword id="KW-0689">Ribosomal protein</keyword>
<evidence type="ECO:0000269" key="1">
    <source>
    </source>
</evidence>
<evidence type="ECO:0000303" key="2">
    <source>
    </source>
</evidence>
<evidence type="ECO:0000305" key="3"/>
<evidence type="ECO:0000305" key="4">
    <source>
    </source>
</evidence>
<evidence type="ECO:0007744" key="5">
    <source>
        <dbReference type="PDB" id="7PZY"/>
    </source>
</evidence>
<evidence type="ECO:0007744" key="6">
    <source>
        <dbReference type="PDB" id="7Q0F"/>
    </source>
</evidence>
<evidence type="ECO:0007744" key="7">
    <source>
        <dbReference type="PDB" id="7Q0P"/>
    </source>
</evidence>
<feature type="chain" id="PRO_0000456505" description="Large ribosomal subunit protein uL29">
    <location>
        <begin position="1"/>
        <end position="120"/>
    </location>
</feature>